<dbReference type="EMBL" id="X17214">
    <property type="protein sequence ID" value="CAA35083.1"/>
    <property type="molecule type" value="Genomic_DNA"/>
</dbReference>
<dbReference type="EMBL" id="AE016833">
    <property type="protein sequence ID" value="AAO83043.1"/>
    <property type="molecule type" value="Genomic_DNA"/>
</dbReference>
<dbReference type="PIR" id="S10223">
    <property type="entry name" value="HMSO1F"/>
</dbReference>
<dbReference type="RefSeq" id="NP_816972.1">
    <property type="nucleotide sequence ID" value="NC_004669.1"/>
</dbReference>
<dbReference type="RefSeq" id="WP_010785625.1">
    <property type="nucleotide sequence ID" value="NZ_KE136530.1"/>
</dbReference>
<dbReference type="SMR" id="P17953"/>
<dbReference type="STRING" id="226185.EF_0485"/>
<dbReference type="EnsemblBacteria" id="AAO83043">
    <property type="protein sequence ID" value="AAO83043"/>
    <property type="gene ID" value="EF_A0047"/>
</dbReference>
<dbReference type="KEGG" id="efa:EFA0047"/>
<dbReference type="PATRIC" id="fig|226185.46.peg.3217"/>
<dbReference type="HOGENOM" id="CLU_007908_0_0_9"/>
<dbReference type="Proteomes" id="UP000001415">
    <property type="component" value="Plasmid pTEF1"/>
</dbReference>
<dbReference type="GO" id="GO:0005576">
    <property type="term" value="C:extracellular region"/>
    <property type="evidence" value="ECO:0007669"/>
    <property type="project" value="UniProtKB-KW"/>
</dbReference>
<dbReference type="Gene3D" id="2.60.40.740">
    <property type="match status" value="4"/>
</dbReference>
<dbReference type="Gene3D" id="2.60.530.10">
    <property type="entry name" value="Major cell-surface adhesin PAc"/>
    <property type="match status" value="1"/>
</dbReference>
<dbReference type="InterPro" id="IPR026345">
    <property type="entry name" value="Adh_isopep-form_adh_dom"/>
</dbReference>
<dbReference type="InterPro" id="IPR041324">
    <property type="entry name" value="AgI/II_N"/>
</dbReference>
<dbReference type="InterPro" id="IPR032300">
    <property type="entry name" value="Antigen_C"/>
</dbReference>
<dbReference type="InterPro" id="IPR013574">
    <property type="entry name" value="Glucan-bd_C/Surface_Ag-I/II_V"/>
</dbReference>
<dbReference type="InterPro" id="IPR022263">
    <property type="entry name" value="KxYKxGKxW"/>
</dbReference>
<dbReference type="InterPro" id="IPR019931">
    <property type="entry name" value="LPXTG_anchor"/>
</dbReference>
<dbReference type="InterPro" id="IPR036234">
    <property type="entry name" value="SA_I/II_PAC_V_sf"/>
</dbReference>
<dbReference type="NCBIfam" id="NF033875">
    <property type="entry name" value="Agg_substance"/>
    <property type="match status" value="1"/>
</dbReference>
<dbReference type="NCBIfam" id="TIGR04228">
    <property type="entry name" value="isopep_sspB_C2"/>
    <property type="match status" value="3"/>
</dbReference>
<dbReference type="NCBIfam" id="TIGR03715">
    <property type="entry name" value="KxYKxGKxW"/>
    <property type="match status" value="1"/>
</dbReference>
<dbReference type="NCBIfam" id="TIGR01167">
    <property type="entry name" value="LPXTG_anchor"/>
    <property type="match status" value="1"/>
</dbReference>
<dbReference type="Pfam" id="PF18652">
    <property type="entry name" value="Adhesin_P1_N"/>
    <property type="match status" value="1"/>
</dbReference>
<dbReference type="Pfam" id="PF17998">
    <property type="entry name" value="AgI_II_C2"/>
    <property type="match status" value="2"/>
</dbReference>
<dbReference type="Pfam" id="PF16364">
    <property type="entry name" value="Antigen_C"/>
    <property type="match status" value="2"/>
</dbReference>
<dbReference type="Pfam" id="PF08363">
    <property type="entry name" value="GbpC"/>
    <property type="match status" value="1"/>
</dbReference>
<dbReference type="Pfam" id="PF00746">
    <property type="entry name" value="Gram_pos_anchor"/>
    <property type="match status" value="1"/>
</dbReference>
<dbReference type="Pfam" id="PF19258">
    <property type="entry name" value="KxYKxGKxW_sig"/>
    <property type="match status" value="1"/>
</dbReference>
<dbReference type="SUPFAM" id="SSF74914">
    <property type="entry name" value="V-region of surface antigen I/II (SA I/II, PAC)"/>
    <property type="match status" value="1"/>
</dbReference>
<dbReference type="PROSITE" id="PS50847">
    <property type="entry name" value="GRAM_POS_ANCHORING"/>
    <property type="match status" value="1"/>
</dbReference>
<protein>
    <recommendedName>
        <fullName>Aggregation substance</fullName>
    </recommendedName>
</protein>
<gene>
    <name type="primary">asa1</name>
    <name type="ordered locus">EF_A0047</name>
</gene>
<proteinExistence type="evidence at protein level"/>
<accession>P17953</accession>
<evidence type="ECO:0000255" key="1">
    <source>
        <dbReference type="PROSITE-ProRule" id="PRU00477"/>
    </source>
</evidence>
<evidence type="ECO:0000256" key="2">
    <source>
        <dbReference type="SAM" id="MobiDB-lite"/>
    </source>
</evidence>
<evidence type="ECO:0000269" key="3">
    <source>
    </source>
</evidence>
<evidence type="ECO:0000305" key="4"/>
<reference key="1">
    <citation type="journal article" date="1990" name="Mol. Microbiol.">
        <title>Sequence analysis of Enterococcus faecalis aggregation substance encoded by the sex pheromone plasmid pAD1.</title>
        <authorList>
            <person name="Galli D."/>
            <person name="Lottspeich F."/>
            <person name="Wirth R."/>
        </authorList>
    </citation>
    <scope>NUCLEOTIDE SEQUENCE [GENOMIC DNA]</scope>
    <scope>PROTEIN SEQUENCE OF 44-51</scope>
    <source>
        <strain>DS16</strain>
        <plasmid>pAD1</plasmid>
    </source>
</reference>
<reference key="2">
    <citation type="journal article" date="2003" name="Science">
        <title>Role of mobile DNA in the evolution of vancomycin-resistant Enterococcus faecalis.</title>
        <authorList>
            <person name="Paulsen I.T."/>
            <person name="Banerjei L."/>
            <person name="Myers G.S.A."/>
            <person name="Nelson K.E."/>
            <person name="Seshadri R."/>
            <person name="Read T.D."/>
            <person name="Fouts D.E."/>
            <person name="Eisen J.A."/>
            <person name="Gill S.R."/>
            <person name="Heidelberg J.F."/>
            <person name="Tettelin H."/>
            <person name="Dodson R.J."/>
            <person name="Umayam L.A."/>
            <person name="Brinkac L.M."/>
            <person name="Beanan M.J."/>
            <person name="Daugherty S.C."/>
            <person name="DeBoy R.T."/>
            <person name="Durkin S.A."/>
            <person name="Kolonay J.F."/>
            <person name="Madupu R."/>
            <person name="Nelson W.C."/>
            <person name="Vamathevan J.J."/>
            <person name="Tran B."/>
            <person name="Upton J."/>
            <person name="Hansen T."/>
            <person name="Shetty J."/>
            <person name="Khouri H.M."/>
            <person name="Utterback T.R."/>
            <person name="Radune D."/>
            <person name="Ketchum K.A."/>
            <person name="Dougherty B.A."/>
            <person name="Fraser C.M."/>
        </authorList>
    </citation>
    <scope>NUCLEOTIDE SEQUENCE [LARGE SCALE GENOMIC DNA]</scope>
    <source>
        <strain>ATCC 700802 / V583</strain>
        <plasmid>pTEF1</plasmid>
    </source>
</reference>
<geneLocation type="plasmid">
    <name>pTEF1</name>
</geneLocation>
<geneLocation type="plasmid">
    <name>pAD1</name>
</geneLocation>
<comment type="function">
    <text>Aggregation substance allows donor and recipient strains to form tight aggregates which allow the non-motile bacteria to maintain physical contact over a period of time sufficient to permit conjugative transfer of the sex pheromone plasmid from donor to recipient strains.</text>
</comment>
<comment type="subcellular location">
    <subcellularLocation>
        <location evidence="1">Secreted</location>
        <location evidence="1">Cell wall</location>
        <topology evidence="1">Peptidoglycan-anchor</topology>
    </subcellularLocation>
</comment>
<comment type="similarity">
    <text evidence="4">Belongs to the antigen I/II family.</text>
</comment>
<feature type="signal peptide" evidence="3">
    <location>
        <begin position="1"/>
        <end position="43"/>
    </location>
</feature>
<feature type="chain" id="PRO_0000005593" description="Aggregation substance">
    <location>
        <begin position="44"/>
        <end position="1264"/>
    </location>
</feature>
<feature type="propeptide" id="PRO_0000005594" description="Removed by sortase" evidence="1">
    <location>
        <begin position="1265"/>
        <end position="1296"/>
    </location>
</feature>
<feature type="region of interest" description="Disordered" evidence="2">
    <location>
        <begin position="48"/>
        <end position="188"/>
    </location>
</feature>
<feature type="region of interest" description="Disordered" evidence="2">
    <location>
        <begin position="1221"/>
        <end position="1245"/>
    </location>
</feature>
<feature type="short sequence motif" description="LPXTG sorting signal" evidence="1">
    <location>
        <begin position="1261"/>
        <end position="1265"/>
    </location>
</feature>
<feature type="compositionally biased region" description="Basic and acidic residues" evidence="2">
    <location>
        <begin position="89"/>
        <end position="99"/>
    </location>
</feature>
<feature type="compositionally biased region" description="Polar residues" evidence="2">
    <location>
        <begin position="100"/>
        <end position="117"/>
    </location>
</feature>
<feature type="compositionally biased region" description="Polar residues" evidence="2">
    <location>
        <begin position="125"/>
        <end position="138"/>
    </location>
</feature>
<feature type="compositionally biased region" description="Basic and acidic residues" evidence="2">
    <location>
        <begin position="160"/>
        <end position="178"/>
    </location>
</feature>
<feature type="modified residue" description="Pentaglycyl murein peptidoglycan amidated threonine" evidence="1">
    <location>
        <position position="1264"/>
    </location>
</feature>
<name>ASA1_ENTFA</name>
<organism>
    <name type="scientific">Enterococcus faecalis (strain ATCC 700802 / V583)</name>
    <dbReference type="NCBI Taxonomy" id="226185"/>
    <lineage>
        <taxon>Bacteria</taxon>
        <taxon>Bacillati</taxon>
        <taxon>Bacillota</taxon>
        <taxon>Bacilli</taxon>
        <taxon>Lactobacillales</taxon>
        <taxon>Enterococcaceae</taxon>
        <taxon>Enterococcus</taxon>
    </lineage>
</organism>
<sequence>MKQQTEVKKRFKMYKAKKHWVVAPILFIGVLGVVGLATDDVQAAELDTQPGTTTVQPDNPDPQVGSTTPKTAVTEEATVQKDTTSQPTKVEEVASEKNGAEQSSATPNDTTNAQQPTVGAEKSAQEQPVVSPETTNEPLGQPTEVAPAENEANKSTSIPKEFETPDVDKAVDEAKKDPNITVVEKPAEDLGNVSSKDLAAKEKEVDQLQKEQAKKIAQQAAELKAKNEKIAKENAEIAAKNKAEKERYEKEVAEYNKHKNENGYVAKPVNKTLIFDREATKNSKVVSVKAAEYIDAKKLTDKHKDKKLLISMLSVDSSGLTTKDSKKAHFYYNNGAGGTLVVLHKNQPVTITYGNLNASYLGKKIASAEFQYTVKATPDSKGRLNAFLHDDPVATIVYGINIDPRTKKAGAEIEMLVRFFGEDGKEILPTKENPFVFSGASLNSRGENITYEFVKVGNTDTVHEINGSKVARHGNKVYSKTDIDVGTNGISISDWEAVQGKEYIGATVISTPNRIKFTFGNEIVNNPGYDGNSMWFAFNTDLKAKSITPYQEKGRPKQPEKATIEFNRYKANVVPVLVPNKEVTDGQKNINDLNVKRGDSLQYIVTGDTTELAKVDPKTVTKQGIRDTFDAEKVTIDLSKVKVYQADASLNEKDLKAVAAAINSGKAKDVTASYDLHLDQNTVTAMMKTNADDSVVLAMGYKYLLVLPFVVKNVEGDFENTAVQLTNDGETVTNTVINHVPGSNPSKDVKADKNGTVGSVSLHDKDIPLQTKIYYEVKSSERPANYGGITEEWGMNDVLDTTHDRFTGKWHAITNYDLKVGDKTLKAGTDISAYILLENKDNKDLTFTMNQALLAALNEGSNKVGKQAWSVYLEVERIKTGDVENTQTENYNKELVRSNTVVTHTPDDPKPTKAVHNKKGEDINHGKVARGDVLSYEMTWDLKGYDKDFAFDTVDLATGVSFFDDYDETKVTPIKDLLRVKDSKGEDITNQFTISWDDAKGTVTISAKDPQAFILAHGGQELRVTLPTKVKANVSGDVYNLAEQNTFGQRIKTNTVVNHIPKVNPKKDVVIKVGDKQSQNGATIKLGEKFFYEFTSSDIPAEYAGIVEEWSISDKLDVKHDKFSGQWSVFANSTFVLADGTKVNKGDDISKLFTMTFEQGVVKITASQAFLDAMNLKENKNVAHSWKAFIGVERIAAGDVYNTIEESFNNEKIKTNTVVTHTPEKPQTPPEKTVIVPPTPKTPQAPVEPLVVEKASVVPELPQTGEKQNVLLTVAGSLAAMLGLAGLGFKRRKETK</sequence>
<keyword id="KW-0134">Cell wall</keyword>
<keyword id="KW-0903">Direct protein sequencing</keyword>
<keyword id="KW-0572">Peptidoglycan-anchor</keyword>
<keyword id="KW-0614">Plasmid</keyword>
<keyword id="KW-1185">Reference proteome</keyword>
<keyword id="KW-0964">Secreted</keyword>
<keyword id="KW-0732">Signal</keyword>